<protein>
    <recommendedName>
        <fullName>Estradiol 17 beta-dehydrogenase 5</fullName>
        <ecNumber>1.1.1.-</ecNumber>
    </recommendedName>
    <alternativeName>
        <fullName>17-beta-HSD 5</fullName>
    </alternativeName>
</protein>
<name>DHB5_MOUSE</name>
<dbReference type="EC" id="1.1.1.-"/>
<dbReference type="EMBL" id="D45850">
    <property type="protein sequence ID" value="BAA08285.1"/>
    <property type="molecule type" value="mRNA"/>
</dbReference>
<dbReference type="EMBL" id="AF110414">
    <property type="protein sequence ID" value="AAD41250.1"/>
    <property type="molecule type" value="Genomic_DNA"/>
</dbReference>
<dbReference type="EMBL" id="AF110408">
    <property type="protein sequence ID" value="AAD41250.1"/>
    <property type="status" value="JOINED"/>
    <property type="molecule type" value="Genomic_DNA"/>
</dbReference>
<dbReference type="EMBL" id="AF110409">
    <property type="protein sequence ID" value="AAD41250.1"/>
    <property type="status" value="JOINED"/>
    <property type="molecule type" value="Genomic_DNA"/>
</dbReference>
<dbReference type="EMBL" id="AF110410">
    <property type="protein sequence ID" value="AAD41250.1"/>
    <property type="status" value="JOINED"/>
    <property type="molecule type" value="Genomic_DNA"/>
</dbReference>
<dbReference type="EMBL" id="AF110411">
    <property type="protein sequence ID" value="AAD41250.1"/>
    <property type="status" value="JOINED"/>
    <property type="molecule type" value="Genomic_DNA"/>
</dbReference>
<dbReference type="EMBL" id="AF110412">
    <property type="protein sequence ID" value="AAD41250.1"/>
    <property type="status" value="JOINED"/>
    <property type="molecule type" value="Genomic_DNA"/>
</dbReference>
<dbReference type="EMBL" id="AF110413">
    <property type="protein sequence ID" value="AAD41250.1"/>
    <property type="status" value="JOINED"/>
    <property type="molecule type" value="Genomic_DNA"/>
</dbReference>
<dbReference type="EMBL" id="BC056643">
    <property type="protein sequence ID" value="AAH56643.1"/>
    <property type="molecule type" value="mRNA"/>
</dbReference>
<dbReference type="CCDS" id="CCDS26223.1"/>
<dbReference type="PIR" id="A56424">
    <property type="entry name" value="A56424"/>
</dbReference>
<dbReference type="RefSeq" id="NP_085114.1">
    <property type="nucleotide sequence ID" value="NM_030611.4"/>
</dbReference>
<dbReference type="SMR" id="P70694"/>
<dbReference type="BioGRID" id="219966">
    <property type="interactions" value="1"/>
</dbReference>
<dbReference type="FunCoup" id="P70694">
    <property type="interactions" value="499"/>
</dbReference>
<dbReference type="IntAct" id="P70694">
    <property type="interactions" value="1"/>
</dbReference>
<dbReference type="STRING" id="10090.ENSMUSP00000021630"/>
<dbReference type="GlyGen" id="P70694">
    <property type="glycosylation" value="1 site, 1 O-linked glycan (1 site)"/>
</dbReference>
<dbReference type="iPTMnet" id="P70694"/>
<dbReference type="PhosphoSitePlus" id="P70694"/>
<dbReference type="SwissPalm" id="P70694"/>
<dbReference type="jPOST" id="P70694"/>
<dbReference type="PaxDb" id="10090-ENSMUSP00000021630"/>
<dbReference type="PeptideAtlas" id="P70694"/>
<dbReference type="ProteomicsDB" id="279354"/>
<dbReference type="Pumba" id="P70694"/>
<dbReference type="DNASU" id="83702"/>
<dbReference type="Ensembl" id="ENSMUST00000021630.15">
    <property type="protein sequence ID" value="ENSMUSP00000021630.9"/>
    <property type="gene ID" value="ENSMUSG00000021210.17"/>
</dbReference>
<dbReference type="GeneID" id="83702"/>
<dbReference type="KEGG" id="mmu:83702"/>
<dbReference type="UCSC" id="uc007pjo.1">
    <property type="organism name" value="mouse"/>
</dbReference>
<dbReference type="AGR" id="MGI:1933427"/>
<dbReference type="CTD" id="83702"/>
<dbReference type="MGI" id="MGI:1933427">
    <property type="gene designation" value="Akr1c6"/>
</dbReference>
<dbReference type="VEuPathDB" id="HostDB:ENSMUSG00000021210"/>
<dbReference type="eggNOG" id="KOG1577">
    <property type="taxonomic scope" value="Eukaryota"/>
</dbReference>
<dbReference type="GeneTree" id="ENSGT00940000153677"/>
<dbReference type="HOGENOM" id="CLU_023205_0_0_1"/>
<dbReference type="InParanoid" id="P70694"/>
<dbReference type="OMA" id="PWCMRQE"/>
<dbReference type="OrthoDB" id="416253at2759"/>
<dbReference type="PhylomeDB" id="P70694"/>
<dbReference type="TreeFam" id="TF106492"/>
<dbReference type="Reactome" id="R-MMU-193368">
    <property type="pathway name" value="Synthesis of bile acids and bile salts via 7alpha-hydroxycholesterol"/>
</dbReference>
<dbReference type="Reactome" id="R-MMU-193775">
    <property type="pathway name" value="Synthesis of bile acids and bile salts via 24-hydroxycholesterol"/>
</dbReference>
<dbReference type="Reactome" id="R-MMU-193807">
    <property type="pathway name" value="Synthesis of bile acids and bile salts via 27-hydroxycholesterol"/>
</dbReference>
<dbReference type="Reactome" id="R-MMU-2162123">
    <property type="pathway name" value="Synthesis of Prostaglandins (PG) and Thromboxanes (TX)"/>
</dbReference>
<dbReference type="Reactome" id="R-MMU-5365859">
    <property type="pathway name" value="RA biosynthesis pathway"/>
</dbReference>
<dbReference type="Reactome" id="R-MMU-975634">
    <property type="pathway name" value="Retinoid metabolism and transport"/>
</dbReference>
<dbReference type="Reactome" id="R-MMU-9757110">
    <property type="pathway name" value="Prednisone ADME"/>
</dbReference>
<dbReference type="BioGRID-ORCS" id="83702">
    <property type="hits" value="5 hits in 78 CRISPR screens"/>
</dbReference>
<dbReference type="PRO" id="PR:P70694"/>
<dbReference type="Proteomes" id="UP000000589">
    <property type="component" value="Chromosome 13"/>
</dbReference>
<dbReference type="RNAct" id="P70694">
    <property type="molecule type" value="protein"/>
</dbReference>
<dbReference type="Bgee" id="ENSMUSG00000021210">
    <property type="expression patterns" value="Expressed in left lobe of liver and 79 other cell types or tissues"/>
</dbReference>
<dbReference type="ExpressionAtlas" id="P70694">
    <property type="expression patterns" value="baseline and differential"/>
</dbReference>
<dbReference type="GO" id="GO:0004033">
    <property type="term" value="F:aldo-keto reductase (NADPH) activity"/>
    <property type="evidence" value="ECO:0000314"/>
    <property type="project" value="MGI"/>
</dbReference>
<dbReference type="GO" id="GO:0004303">
    <property type="term" value="F:estradiol 17-beta-dehydrogenase [NAD(P)+] activity"/>
    <property type="evidence" value="ECO:0000314"/>
    <property type="project" value="MGI"/>
</dbReference>
<dbReference type="GO" id="GO:0048025">
    <property type="term" value="P:negative regulation of mRNA splicing, via spliceosome"/>
    <property type="evidence" value="ECO:0000315"/>
    <property type="project" value="MGI"/>
</dbReference>
<dbReference type="GO" id="GO:0006694">
    <property type="term" value="P:steroid biosynthetic process"/>
    <property type="evidence" value="ECO:0000314"/>
    <property type="project" value="MGI"/>
</dbReference>
<dbReference type="GO" id="GO:0008202">
    <property type="term" value="P:steroid metabolic process"/>
    <property type="evidence" value="ECO:0000314"/>
    <property type="project" value="MGI"/>
</dbReference>
<dbReference type="CDD" id="cd19108">
    <property type="entry name" value="AKR_AKR1C1-35"/>
    <property type="match status" value="1"/>
</dbReference>
<dbReference type="FunFam" id="3.20.20.100:FF:000003">
    <property type="entry name" value="Aldo-keto reductase family 1 member C3"/>
    <property type="match status" value="1"/>
</dbReference>
<dbReference type="Gene3D" id="3.20.20.100">
    <property type="entry name" value="NADP-dependent oxidoreductase domain"/>
    <property type="match status" value="1"/>
</dbReference>
<dbReference type="InterPro" id="IPR020471">
    <property type="entry name" value="AKR"/>
</dbReference>
<dbReference type="InterPro" id="IPR044482">
    <property type="entry name" value="AKR1C"/>
</dbReference>
<dbReference type="InterPro" id="IPR018170">
    <property type="entry name" value="Aldo/ket_reductase_CS"/>
</dbReference>
<dbReference type="InterPro" id="IPR023210">
    <property type="entry name" value="NADP_OxRdtase_dom"/>
</dbReference>
<dbReference type="InterPro" id="IPR036812">
    <property type="entry name" value="NADP_OxRdtase_dom_sf"/>
</dbReference>
<dbReference type="PANTHER" id="PTHR11732">
    <property type="entry name" value="ALDO/KETO REDUCTASE"/>
    <property type="match status" value="1"/>
</dbReference>
<dbReference type="Pfam" id="PF00248">
    <property type="entry name" value="Aldo_ket_red"/>
    <property type="match status" value="1"/>
</dbReference>
<dbReference type="PIRSF" id="PIRSF000097">
    <property type="entry name" value="AKR"/>
    <property type="match status" value="1"/>
</dbReference>
<dbReference type="PRINTS" id="PR00069">
    <property type="entry name" value="ALDKETRDTASE"/>
</dbReference>
<dbReference type="SUPFAM" id="SSF51430">
    <property type="entry name" value="NAD(P)-linked oxidoreductase"/>
    <property type="match status" value="1"/>
</dbReference>
<dbReference type="PROSITE" id="PS00798">
    <property type="entry name" value="ALDOKETO_REDUCTASE_1"/>
    <property type="match status" value="1"/>
</dbReference>
<dbReference type="PROSITE" id="PS00062">
    <property type="entry name" value="ALDOKETO_REDUCTASE_2"/>
    <property type="match status" value="1"/>
</dbReference>
<dbReference type="PROSITE" id="PS00063">
    <property type="entry name" value="ALDOKETO_REDUCTASE_3"/>
    <property type="match status" value="1"/>
</dbReference>
<feature type="chain" id="PRO_0000124652" description="Estradiol 17 beta-dehydrogenase 5">
    <location>
        <begin position="1"/>
        <end position="323"/>
    </location>
</feature>
<feature type="active site" description="Proton donor" evidence="1">
    <location>
        <position position="55"/>
    </location>
</feature>
<feature type="binding site" evidence="1">
    <location>
        <begin position="20"/>
        <end position="24"/>
    </location>
    <ligand>
        <name>NADP(+)</name>
        <dbReference type="ChEBI" id="CHEBI:58349"/>
    </ligand>
</feature>
<feature type="binding site" evidence="1">
    <location>
        <position position="50"/>
    </location>
    <ligand>
        <name>NADP(+)</name>
        <dbReference type="ChEBI" id="CHEBI:58349"/>
    </ligand>
</feature>
<feature type="binding site" evidence="1">
    <location>
        <position position="117"/>
    </location>
    <ligand>
        <name>substrate</name>
    </ligand>
</feature>
<feature type="binding site" evidence="1">
    <location>
        <begin position="166"/>
        <end position="167"/>
    </location>
    <ligand>
        <name>NADP(+)</name>
        <dbReference type="ChEBI" id="CHEBI:58349"/>
    </ligand>
</feature>
<feature type="binding site" evidence="1">
    <location>
        <position position="190"/>
    </location>
    <ligand>
        <name>NADP(+)</name>
        <dbReference type="ChEBI" id="CHEBI:58349"/>
    </ligand>
</feature>
<feature type="binding site" evidence="1">
    <location>
        <begin position="216"/>
        <end position="221"/>
    </location>
    <ligand>
        <name>NADP(+)</name>
        <dbReference type="ChEBI" id="CHEBI:58349"/>
    </ligand>
</feature>
<feature type="binding site" evidence="1">
    <location>
        <begin position="270"/>
        <end position="280"/>
    </location>
    <ligand>
        <name>NADP(+)</name>
        <dbReference type="ChEBI" id="CHEBI:58349"/>
    </ligand>
</feature>
<feature type="site" description="Lowers pKa of active site Tyr" evidence="1">
    <location>
        <position position="84"/>
    </location>
</feature>
<evidence type="ECO:0000250" key="1"/>
<evidence type="ECO:0000269" key="2">
    <source>
    </source>
</evidence>
<evidence type="ECO:0000305" key="3"/>
<proteinExistence type="evidence at protein level"/>
<accession>P70694</accession>
<keyword id="KW-0903">Direct protein sequencing</keyword>
<keyword id="KW-0444">Lipid biosynthesis</keyword>
<keyword id="KW-0443">Lipid metabolism</keyword>
<keyword id="KW-0521">NADP</keyword>
<keyword id="KW-0560">Oxidoreductase</keyword>
<keyword id="KW-1185">Reference proteome</keyword>
<keyword id="KW-0752">Steroid biosynthesis</keyword>
<organism>
    <name type="scientific">Mus musculus</name>
    <name type="common">Mouse</name>
    <dbReference type="NCBI Taxonomy" id="10090"/>
    <lineage>
        <taxon>Eukaryota</taxon>
        <taxon>Metazoa</taxon>
        <taxon>Chordata</taxon>
        <taxon>Craniata</taxon>
        <taxon>Vertebrata</taxon>
        <taxon>Euteleostomi</taxon>
        <taxon>Mammalia</taxon>
        <taxon>Eutheria</taxon>
        <taxon>Euarchontoglires</taxon>
        <taxon>Glires</taxon>
        <taxon>Rodentia</taxon>
        <taxon>Myomorpha</taxon>
        <taxon>Muroidea</taxon>
        <taxon>Muridae</taxon>
        <taxon>Murinae</taxon>
        <taxon>Mus</taxon>
        <taxon>Mus</taxon>
    </lineage>
</organism>
<sequence>MDSKQQTVRLSDGHFIPILGFGTYAPQEVPKSKATEATKIAIDAGFRHIDSASMYQNEKEVGLAIRSKIADGTVKREDIFYTSKVWCTFHRPELVRVCLEQSLKQLQLDYVDLYLIHFPMAMKPGENYLPKDENGKLIYDAVDICDTWEAMEKCKDAGLAKSIGVSNFNRRQLEKILKKPGLKYKPVCNQVECHPYLNQGKLLDFCRSKDIVLVAYSALGSHREKQWVDQSSPVLLDNPVLGSMAKKYNRTPALIALRYQLQRGVVVLAKSFSEKRIKENMQVFEFQLTSEDMKVLDDLNKNIRYISGSSFKDHPDFPFWDEY</sequence>
<comment type="function">
    <text evidence="2">Active toward androgens, estrogens, and xenobiotic substrates. Also exhibits low 20 alpha-HSD activity. Shows a-stereospecificity in hydrogen transfer between cofactors and substrates (A-specific). Preferentially catalyzes the reduction of 4-androstenedione, 5-alpha-androstane-3,17-dione, androsterone and dehydroepiandrosterone to testosterone, dihydrotestosterone, 5-alpha-androstane-3-alpha,17-beta-diol and 5-androstene-3-beta,17-beta-diol, respectively.</text>
</comment>
<comment type="subunit">
    <text>Monomer.</text>
</comment>
<comment type="tissue specificity">
    <text evidence="2">Mainly found in liver. Also expressed weakly in kidney.</text>
</comment>
<comment type="PTM">
    <text>Three forms are detected, probably due to post-translational modifications.</text>
</comment>
<comment type="similarity">
    <text evidence="3">Belongs to the aldo/keto reductase family.</text>
</comment>
<gene>
    <name type="primary">Akr1c6</name>
    <name type="synonym">Hsd17b5</name>
</gene>
<reference key="1">
    <citation type="journal article" date="1995" name="J. Biol. Chem.">
        <title>Molecular cloning and characterization of mouse estradiol 17 beta-dehydrogenase (A-specific), a member of the aldoketoreductase family.</title>
        <authorList>
            <person name="Deyashiki Y."/>
            <person name="Ohshima K."/>
            <person name="Nakanishi M."/>
            <person name="Sato K."/>
            <person name="Matsuura K."/>
            <person name="Hara A."/>
        </authorList>
    </citation>
    <scope>NUCLEOTIDE SEQUENCE [MRNA]</scope>
    <scope>PROTEIN SEQUENCE OF N-TERMINUS</scope>
    <scope>PARTIAL PROTEIN SEQUENCE</scope>
    <source>
        <strain>BALB/cJ</strain>
        <tissue>Liver</tissue>
    </source>
</reference>
<reference key="2">
    <citation type="journal article" date="1999" name="Biochim. Biophys. Acta">
        <title>Structure and activity of the murine type 5 17beta-hydroxysteroid dehydrogenase gene.</title>
        <authorList>
            <person name="Rheault P."/>
            <person name="Charbonneau A."/>
            <person name="Luu-The V."/>
        </authorList>
    </citation>
    <scope>NUCLEOTIDE SEQUENCE [GENOMIC DNA]</scope>
    <scope>FUNCTION</scope>
    <scope>TISSUE SPECIFICITY</scope>
    <source>
        <strain>BALB/cJ</strain>
        <tissue>Leukocyte</tissue>
    </source>
</reference>
<reference key="3">
    <citation type="journal article" date="2004" name="Genome Res.">
        <title>The status, quality, and expansion of the NIH full-length cDNA project: the Mammalian Gene Collection (MGC).</title>
        <authorList>
            <consortium name="The MGC Project Team"/>
        </authorList>
    </citation>
    <scope>NUCLEOTIDE SEQUENCE [LARGE SCALE MRNA]</scope>
    <source>
        <strain>FVB/N</strain>
        <tissue>Liver</tissue>
    </source>
</reference>
<reference key="4">
    <citation type="journal article" date="2010" name="Cell">
        <title>A tissue-specific atlas of mouse protein phosphorylation and expression.</title>
        <authorList>
            <person name="Huttlin E.L."/>
            <person name="Jedrychowski M.P."/>
            <person name="Elias J.E."/>
            <person name="Goswami T."/>
            <person name="Rad R."/>
            <person name="Beausoleil S.A."/>
            <person name="Villen J."/>
            <person name="Haas W."/>
            <person name="Sowa M.E."/>
            <person name="Gygi S.P."/>
        </authorList>
    </citation>
    <scope>IDENTIFICATION BY MASS SPECTROMETRY [LARGE SCALE ANALYSIS]</scope>
    <source>
        <tissue>Liver</tissue>
        <tissue>Lung</tissue>
    </source>
</reference>